<reference key="1">
    <citation type="journal article" date="2008" name="Mol. Biol. Evol.">
        <title>Genome evolution of Wolbachia strain wPip from the Culex pipiens group.</title>
        <authorList>
            <person name="Klasson L."/>
            <person name="Walker T."/>
            <person name="Sebaihia M."/>
            <person name="Sanders M.J."/>
            <person name="Quail M.A."/>
            <person name="Lord A."/>
            <person name="Sanders S."/>
            <person name="Earl J."/>
            <person name="O'Neill S.L."/>
            <person name="Thomson N."/>
            <person name="Sinkins S.P."/>
            <person name="Parkhill J."/>
        </authorList>
    </citation>
    <scope>NUCLEOTIDE SEQUENCE [LARGE SCALE GENOMIC DNA]</scope>
    <source>
        <strain>wPip</strain>
    </source>
</reference>
<proteinExistence type="inferred from homology"/>
<evidence type="ECO:0000255" key="1">
    <source>
        <dbReference type="HAMAP-Rule" id="MF_00191"/>
    </source>
</evidence>
<gene>
    <name evidence="1" type="primary">ispH</name>
    <name type="ordered locus">WP0811</name>
</gene>
<accession>B3CM01</accession>
<dbReference type="EC" id="1.17.7.4" evidence="1"/>
<dbReference type="EMBL" id="AM999887">
    <property type="protein sequence ID" value="CAQ54919.1"/>
    <property type="molecule type" value="Genomic_DNA"/>
</dbReference>
<dbReference type="RefSeq" id="WP_007302221.1">
    <property type="nucleotide sequence ID" value="NC_010981.1"/>
</dbReference>
<dbReference type="SMR" id="B3CM01"/>
<dbReference type="KEGG" id="wpi:WP0811"/>
<dbReference type="eggNOG" id="COG0761">
    <property type="taxonomic scope" value="Bacteria"/>
</dbReference>
<dbReference type="HOGENOM" id="CLU_027486_1_0_5"/>
<dbReference type="UniPathway" id="UPA00056">
    <property type="reaction ID" value="UER00097"/>
</dbReference>
<dbReference type="UniPathway" id="UPA00059">
    <property type="reaction ID" value="UER00105"/>
</dbReference>
<dbReference type="Proteomes" id="UP000008814">
    <property type="component" value="Chromosome"/>
</dbReference>
<dbReference type="GO" id="GO:0051539">
    <property type="term" value="F:4 iron, 4 sulfur cluster binding"/>
    <property type="evidence" value="ECO:0007669"/>
    <property type="project" value="UniProtKB-UniRule"/>
</dbReference>
<dbReference type="GO" id="GO:0051745">
    <property type="term" value="F:4-hydroxy-3-methylbut-2-enyl diphosphate reductase activity"/>
    <property type="evidence" value="ECO:0007669"/>
    <property type="project" value="UniProtKB-UniRule"/>
</dbReference>
<dbReference type="GO" id="GO:0046872">
    <property type="term" value="F:metal ion binding"/>
    <property type="evidence" value="ECO:0007669"/>
    <property type="project" value="UniProtKB-KW"/>
</dbReference>
<dbReference type="GO" id="GO:0050992">
    <property type="term" value="P:dimethylallyl diphosphate biosynthetic process"/>
    <property type="evidence" value="ECO:0007669"/>
    <property type="project" value="UniProtKB-UniRule"/>
</dbReference>
<dbReference type="GO" id="GO:0019288">
    <property type="term" value="P:isopentenyl diphosphate biosynthetic process, methylerythritol 4-phosphate pathway"/>
    <property type="evidence" value="ECO:0007669"/>
    <property type="project" value="UniProtKB-UniRule"/>
</dbReference>
<dbReference type="GO" id="GO:0016114">
    <property type="term" value="P:terpenoid biosynthetic process"/>
    <property type="evidence" value="ECO:0007669"/>
    <property type="project" value="UniProtKB-UniRule"/>
</dbReference>
<dbReference type="CDD" id="cd13944">
    <property type="entry name" value="lytB_ispH"/>
    <property type="match status" value="1"/>
</dbReference>
<dbReference type="Gene3D" id="3.40.50.11270">
    <property type="match status" value="1"/>
</dbReference>
<dbReference type="Gene3D" id="3.40.1010.20">
    <property type="entry name" value="4-hydroxy-3-methylbut-2-enyl diphosphate reductase, catalytic domain"/>
    <property type="match status" value="2"/>
</dbReference>
<dbReference type="HAMAP" id="MF_00191">
    <property type="entry name" value="IspH"/>
    <property type="match status" value="1"/>
</dbReference>
<dbReference type="InterPro" id="IPR003451">
    <property type="entry name" value="LytB/IspH"/>
</dbReference>
<dbReference type="NCBIfam" id="TIGR00216">
    <property type="entry name" value="ispH_lytB"/>
    <property type="match status" value="1"/>
</dbReference>
<dbReference type="NCBIfam" id="NF002190">
    <property type="entry name" value="PRK01045.1-4"/>
    <property type="match status" value="1"/>
</dbReference>
<dbReference type="PANTHER" id="PTHR30426">
    <property type="entry name" value="4-HYDROXY-3-METHYLBUT-2-ENYL DIPHOSPHATE REDUCTASE"/>
    <property type="match status" value="1"/>
</dbReference>
<dbReference type="PANTHER" id="PTHR30426:SF0">
    <property type="entry name" value="4-HYDROXY-3-METHYLBUT-2-ENYL DIPHOSPHATE REDUCTASE"/>
    <property type="match status" value="1"/>
</dbReference>
<dbReference type="Pfam" id="PF02401">
    <property type="entry name" value="LYTB"/>
    <property type="match status" value="1"/>
</dbReference>
<sequence length="308" mass="34484">MEIILAEPRGFCAGVKRAVDILAITLEKYKNERQVYVLHEIVHNKYIVEGFKKQGVVFVSSIEDIKDNRGILIFSAHGVSKSIEDEAKRKGVQVIDATCPLVSKVHKEAKRYEDSGKELILIGHENHPEVKGIIGRVSNPISLVQTMQDVYNLQIKDPDNLSYVTQTTLSIDDTKEIIATLKLRFPSITGPDLKDICYATQNRQNAVKKLAKITDVVLIVGSKNSSNSNRLLDLCISTGKRAYLIDNYKCMNKNWLQGAEKIGITAGASAPDILVDELVNYLKINMNTKVSVMPDGFTENVQFKYTKW</sequence>
<keyword id="KW-0004">4Fe-4S</keyword>
<keyword id="KW-0408">Iron</keyword>
<keyword id="KW-0411">Iron-sulfur</keyword>
<keyword id="KW-0414">Isoprene biosynthesis</keyword>
<keyword id="KW-0479">Metal-binding</keyword>
<keyword id="KW-0560">Oxidoreductase</keyword>
<feature type="chain" id="PRO_1000098987" description="4-hydroxy-3-methylbut-2-enyl diphosphate reductase">
    <location>
        <begin position="1"/>
        <end position="308"/>
    </location>
</feature>
<feature type="active site" description="Proton donor" evidence="1">
    <location>
        <position position="129"/>
    </location>
</feature>
<feature type="binding site" evidence="1">
    <location>
        <position position="12"/>
    </location>
    <ligand>
        <name>[4Fe-4S] cluster</name>
        <dbReference type="ChEBI" id="CHEBI:49883"/>
    </ligand>
</feature>
<feature type="binding site" evidence="1">
    <location>
        <position position="43"/>
    </location>
    <ligand>
        <name>(2E)-4-hydroxy-3-methylbut-2-enyl diphosphate</name>
        <dbReference type="ChEBI" id="CHEBI:128753"/>
    </ligand>
</feature>
<feature type="binding site" evidence="1">
    <location>
        <position position="43"/>
    </location>
    <ligand>
        <name>dimethylallyl diphosphate</name>
        <dbReference type="ChEBI" id="CHEBI:57623"/>
    </ligand>
</feature>
<feature type="binding site" evidence="1">
    <location>
        <position position="43"/>
    </location>
    <ligand>
        <name>isopentenyl diphosphate</name>
        <dbReference type="ChEBI" id="CHEBI:128769"/>
    </ligand>
</feature>
<feature type="binding site" evidence="1">
    <location>
        <position position="77"/>
    </location>
    <ligand>
        <name>(2E)-4-hydroxy-3-methylbut-2-enyl diphosphate</name>
        <dbReference type="ChEBI" id="CHEBI:128753"/>
    </ligand>
</feature>
<feature type="binding site" evidence="1">
    <location>
        <position position="77"/>
    </location>
    <ligand>
        <name>dimethylallyl diphosphate</name>
        <dbReference type="ChEBI" id="CHEBI:57623"/>
    </ligand>
</feature>
<feature type="binding site" evidence="1">
    <location>
        <position position="77"/>
    </location>
    <ligand>
        <name>isopentenyl diphosphate</name>
        <dbReference type="ChEBI" id="CHEBI:128769"/>
    </ligand>
</feature>
<feature type="binding site" evidence="1">
    <location>
        <position position="99"/>
    </location>
    <ligand>
        <name>[4Fe-4S] cluster</name>
        <dbReference type="ChEBI" id="CHEBI:49883"/>
    </ligand>
</feature>
<feature type="binding site" evidence="1">
    <location>
        <position position="127"/>
    </location>
    <ligand>
        <name>(2E)-4-hydroxy-3-methylbut-2-enyl diphosphate</name>
        <dbReference type="ChEBI" id="CHEBI:128753"/>
    </ligand>
</feature>
<feature type="binding site" evidence="1">
    <location>
        <position position="127"/>
    </location>
    <ligand>
        <name>dimethylallyl diphosphate</name>
        <dbReference type="ChEBI" id="CHEBI:57623"/>
    </ligand>
</feature>
<feature type="binding site" evidence="1">
    <location>
        <position position="127"/>
    </location>
    <ligand>
        <name>isopentenyl diphosphate</name>
        <dbReference type="ChEBI" id="CHEBI:128769"/>
    </ligand>
</feature>
<feature type="binding site" evidence="1">
    <location>
        <position position="167"/>
    </location>
    <ligand>
        <name>(2E)-4-hydroxy-3-methylbut-2-enyl diphosphate</name>
        <dbReference type="ChEBI" id="CHEBI:128753"/>
    </ligand>
</feature>
<feature type="binding site" evidence="1">
    <location>
        <position position="197"/>
    </location>
    <ligand>
        <name>[4Fe-4S] cluster</name>
        <dbReference type="ChEBI" id="CHEBI:49883"/>
    </ligand>
</feature>
<feature type="binding site" evidence="1">
    <location>
        <position position="225"/>
    </location>
    <ligand>
        <name>(2E)-4-hydroxy-3-methylbut-2-enyl diphosphate</name>
        <dbReference type="ChEBI" id="CHEBI:128753"/>
    </ligand>
</feature>
<feature type="binding site" evidence="1">
    <location>
        <position position="225"/>
    </location>
    <ligand>
        <name>dimethylallyl diphosphate</name>
        <dbReference type="ChEBI" id="CHEBI:57623"/>
    </ligand>
</feature>
<feature type="binding site" evidence="1">
    <location>
        <position position="225"/>
    </location>
    <ligand>
        <name>isopentenyl diphosphate</name>
        <dbReference type="ChEBI" id="CHEBI:128769"/>
    </ligand>
</feature>
<feature type="binding site" evidence="1">
    <location>
        <position position="226"/>
    </location>
    <ligand>
        <name>(2E)-4-hydroxy-3-methylbut-2-enyl diphosphate</name>
        <dbReference type="ChEBI" id="CHEBI:128753"/>
    </ligand>
</feature>
<feature type="binding site" evidence="1">
    <location>
        <position position="226"/>
    </location>
    <ligand>
        <name>dimethylallyl diphosphate</name>
        <dbReference type="ChEBI" id="CHEBI:57623"/>
    </ligand>
</feature>
<feature type="binding site" evidence="1">
    <location>
        <position position="226"/>
    </location>
    <ligand>
        <name>isopentenyl diphosphate</name>
        <dbReference type="ChEBI" id="CHEBI:128769"/>
    </ligand>
</feature>
<feature type="binding site" evidence="1">
    <location>
        <position position="227"/>
    </location>
    <ligand>
        <name>(2E)-4-hydroxy-3-methylbut-2-enyl diphosphate</name>
        <dbReference type="ChEBI" id="CHEBI:128753"/>
    </ligand>
</feature>
<feature type="binding site" evidence="1">
    <location>
        <position position="227"/>
    </location>
    <ligand>
        <name>dimethylallyl diphosphate</name>
        <dbReference type="ChEBI" id="CHEBI:57623"/>
    </ligand>
</feature>
<feature type="binding site" evidence="1">
    <location>
        <position position="227"/>
    </location>
    <ligand>
        <name>isopentenyl diphosphate</name>
        <dbReference type="ChEBI" id="CHEBI:128769"/>
    </ligand>
</feature>
<feature type="binding site" evidence="1">
    <location>
        <position position="269"/>
    </location>
    <ligand>
        <name>(2E)-4-hydroxy-3-methylbut-2-enyl diphosphate</name>
        <dbReference type="ChEBI" id="CHEBI:128753"/>
    </ligand>
</feature>
<feature type="binding site" evidence="1">
    <location>
        <position position="269"/>
    </location>
    <ligand>
        <name>dimethylallyl diphosphate</name>
        <dbReference type="ChEBI" id="CHEBI:57623"/>
    </ligand>
</feature>
<feature type="binding site" evidence="1">
    <location>
        <position position="269"/>
    </location>
    <ligand>
        <name>isopentenyl diphosphate</name>
        <dbReference type="ChEBI" id="CHEBI:128769"/>
    </ligand>
</feature>
<organism>
    <name type="scientific">Wolbachia pipientis subsp. Culex pipiens (strain wPip)</name>
    <dbReference type="NCBI Taxonomy" id="570417"/>
    <lineage>
        <taxon>Bacteria</taxon>
        <taxon>Pseudomonadati</taxon>
        <taxon>Pseudomonadota</taxon>
        <taxon>Alphaproteobacteria</taxon>
        <taxon>Rickettsiales</taxon>
        <taxon>Anaplasmataceae</taxon>
        <taxon>Wolbachieae</taxon>
        <taxon>Wolbachia</taxon>
    </lineage>
</organism>
<name>ISPH_WOLPP</name>
<comment type="function">
    <text evidence="1">Catalyzes the conversion of 1-hydroxy-2-methyl-2-(E)-butenyl 4-diphosphate (HMBPP) into a mixture of isopentenyl diphosphate (IPP) and dimethylallyl diphosphate (DMAPP). Acts in the terminal step of the DOXP/MEP pathway for isoprenoid precursor biosynthesis.</text>
</comment>
<comment type="catalytic activity">
    <reaction evidence="1">
        <text>isopentenyl diphosphate + 2 oxidized [2Fe-2S]-[ferredoxin] + H2O = (2E)-4-hydroxy-3-methylbut-2-enyl diphosphate + 2 reduced [2Fe-2S]-[ferredoxin] + 2 H(+)</text>
        <dbReference type="Rhea" id="RHEA:24488"/>
        <dbReference type="Rhea" id="RHEA-COMP:10000"/>
        <dbReference type="Rhea" id="RHEA-COMP:10001"/>
        <dbReference type="ChEBI" id="CHEBI:15377"/>
        <dbReference type="ChEBI" id="CHEBI:15378"/>
        <dbReference type="ChEBI" id="CHEBI:33737"/>
        <dbReference type="ChEBI" id="CHEBI:33738"/>
        <dbReference type="ChEBI" id="CHEBI:128753"/>
        <dbReference type="ChEBI" id="CHEBI:128769"/>
        <dbReference type="EC" id="1.17.7.4"/>
    </reaction>
</comment>
<comment type="catalytic activity">
    <reaction evidence="1">
        <text>dimethylallyl diphosphate + 2 oxidized [2Fe-2S]-[ferredoxin] + H2O = (2E)-4-hydroxy-3-methylbut-2-enyl diphosphate + 2 reduced [2Fe-2S]-[ferredoxin] + 2 H(+)</text>
        <dbReference type="Rhea" id="RHEA:24825"/>
        <dbReference type="Rhea" id="RHEA-COMP:10000"/>
        <dbReference type="Rhea" id="RHEA-COMP:10001"/>
        <dbReference type="ChEBI" id="CHEBI:15377"/>
        <dbReference type="ChEBI" id="CHEBI:15378"/>
        <dbReference type="ChEBI" id="CHEBI:33737"/>
        <dbReference type="ChEBI" id="CHEBI:33738"/>
        <dbReference type="ChEBI" id="CHEBI:57623"/>
        <dbReference type="ChEBI" id="CHEBI:128753"/>
        <dbReference type="EC" id="1.17.7.4"/>
    </reaction>
</comment>
<comment type="cofactor">
    <cofactor evidence="1">
        <name>[4Fe-4S] cluster</name>
        <dbReference type="ChEBI" id="CHEBI:49883"/>
    </cofactor>
    <text evidence="1">Binds 1 [4Fe-4S] cluster per subunit.</text>
</comment>
<comment type="pathway">
    <text evidence="1">Isoprenoid biosynthesis; dimethylallyl diphosphate biosynthesis; dimethylallyl diphosphate from (2E)-4-hydroxy-3-methylbutenyl diphosphate: step 1/1.</text>
</comment>
<comment type="pathway">
    <text evidence="1">Isoprenoid biosynthesis; isopentenyl diphosphate biosynthesis via DXP pathway; isopentenyl diphosphate from 1-deoxy-D-xylulose 5-phosphate: step 6/6.</text>
</comment>
<comment type="similarity">
    <text evidence="1">Belongs to the IspH family.</text>
</comment>
<protein>
    <recommendedName>
        <fullName evidence="1">4-hydroxy-3-methylbut-2-enyl diphosphate reductase</fullName>
        <shortName evidence="1">HMBPP reductase</shortName>
        <ecNumber evidence="1">1.17.7.4</ecNumber>
    </recommendedName>
</protein>